<name>CIROP_HUMAN</name>
<organism>
    <name type="scientific">Homo sapiens</name>
    <name type="common">Human</name>
    <dbReference type="NCBI Taxonomy" id="9606"/>
    <lineage>
        <taxon>Eukaryota</taxon>
        <taxon>Metazoa</taxon>
        <taxon>Chordata</taxon>
        <taxon>Craniata</taxon>
        <taxon>Vertebrata</taxon>
        <taxon>Euteleostomi</taxon>
        <taxon>Mammalia</taxon>
        <taxon>Eutheria</taxon>
        <taxon>Euarchontoglires</taxon>
        <taxon>Primates</taxon>
        <taxon>Haplorrhini</taxon>
        <taxon>Catarrhini</taxon>
        <taxon>Hominidae</taxon>
        <taxon>Homo</taxon>
    </lineage>
</organism>
<sequence length="788" mass="85397">MLLLLLLLLLLPPLVLRVAASRCLHDETQKSVSLLRPPFSQLPSKSRSSSLTLPSSRDPQPLRIQSCYLGDHISDGAWDPEGEGMRGGSRALAAVREATQRIQAVLAVQGPLLLSRDPAQYCHAVWGDPDSPNYHRCSLLNPGYKGESCLGAKIPDTHLRGYALWPEQGPPQLVQPDGPGVQNTDFLLYVRVAHTSKCHQETVSLCCPGWSTAAQSQLTAALTSWAQRRGFVMLPRLCLKLLGSSNLPTLASQSIRITGPSVIAYAACCQLDSEDRPLAGTIVYCAQHLTSPSLSHSDIVMATLHELLHALGFSGQLFKKWRDCPSGFSVRENCSTRQLVTRQDEWGQLLLTTPAVSLSLAKHLGVSGASLGVPLEEEEGLLSSHWEARLLQGSLMTATFDGAQRTRLDPITLAAFKDSGWYQVNHSAAEELLWGQGSGPEFGLVTTCGTGSSDFFCTGSGLGCHYLHLDKGSCSSDPMLEGCRMYKPLANGSECWKKENGFPAGVDNPHGEIYHPQSRCFFANLTSQLLPGDKPRHPSLTPHLKEAELMGRCYLHQCTGRGAYKVQVEGSPWVPCLPGKVIQIPGYYGLLFCPRGRLCQTNEDINAVTSPPVSLSTPDPLFQLSLELAGPPGHSLGKEQQEGLAEAVLEALASKGGTGRCYFHGPSITTSLVFTVHMWKSPGCQGPSVATLHKALTLTLQKKPLEVYHGGANFTTQPSKLLVTSDHNPSMTHLRLSMGLCLMLLILVGVMGTTAYQKRATLPVRPSASYHSPELHSTRVPVRGIREV</sequence>
<dbReference type="EC" id="3.4.24.-" evidence="3"/>
<dbReference type="EMBL" id="AL117258">
    <property type="status" value="NOT_ANNOTATED_CDS"/>
    <property type="molecule type" value="Genomic_DNA"/>
</dbReference>
<dbReference type="EMBL" id="BC153822">
    <property type="status" value="NOT_ANNOTATED_CDS"/>
    <property type="molecule type" value="mRNA"/>
</dbReference>
<dbReference type="CCDS" id="CCDS86373.1">
    <molecule id="A0A1B0GTW7-1"/>
</dbReference>
<dbReference type="RefSeq" id="NP_001341569.1">
    <molecule id="A0A1B0GTW7-1"/>
    <property type="nucleotide sequence ID" value="NM_001354640.2"/>
</dbReference>
<dbReference type="SMR" id="A0A1B0GTW7"/>
<dbReference type="FunCoup" id="A0A1B0GTW7">
    <property type="interactions" value="28"/>
</dbReference>
<dbReference type="GlyCosmos" id="A0A1B0GTW7">
    <property type="glycosylation" value="5 sites, No reported glycans"/>
</dbReference>
<dbReference type="GlyGen" id="A0A1B0GTW7">
    <property type="glycosylation" value="5 sites, 1 N-linked glycan (1 site)"/>
</dbReference>
<dbReference type="BioMuta" id="ENSG00000283654"/>
<dbReference type="MassIVE" id="A0A1B0GTW7"/>
<dbReference type="PeptideAtlas" id="A0A1B0GTW7"/>
<dbReference type="Ensembl" id="ENST00000637218.2">
    <molecule id="A0A1B0GTW7-1"/>
    <property type="protein sequence ID" value="ENSP00000489869.1"/>
    <property type="gene ID" value="ENSG00000283654.3"/>
</dbReference>
<dbReference type="Ensembl" id="ENST00000644000.1">
    <molecule id="A0A1B0GTW7-2"/>
    <property type="protein sequence ID" value="ENSP00000493582.1"/>
    <property type="gene ID" value="ENSG00000283654.3"/>
</dbReference>
<dbReference type="GeneID" id="100128908"/>
<dbReference type="MANE-Select" id="ENST00000637218.2">
    <property type="protein sequence ID" value="ENSP00000489869.1"/>
    <property type="RefSeq nucleotide sequence ID" value="NM_001354640.2"/>
    <property type="RefSeq protein sequence ID" value="NP_001341569.1"/>
</dbReference>
<dbReference type="AGR" id="HGNC:53647"/>
<dbReference type="GeneCards" id="CIROP"/>
<dbReference type="HGNC" id="HGNC:53647">
    <property type="gene designation" value="CIROP"/>
</dbReference>
<dbReference type="HPA" id="ENSG00000283654">
    <property type="expression patterns" value="Not detected"/>
</dbReference>
<dbReference type="MalaCards" id="CIROP"/>
<dbReference type="MIM" id="619702">
    <property type="type" value="phenotype"/>
</dbReference>
<dbReference type="MIM" id="619703">
    <property type="type" value="gene"/>
</dbReference>
<dbReference type="neXtProt" id="NX_A0A1B0GTW7"/>
<dbReference type="Orphanet" id="157769">
    <property type="disease" value="Situs ambiguus"/>
</dbReference>
<dbReference type="Orphanet" id="101063">
    <property type="disease" value="Situs inversus totalis"/>
</dbReference>
<dbReference type="VEuPathDB" id="HostDB:ENSG00000283654"/>
<dbReference type="GeneTree" id="ENSGT00940000163573"/>
<dbReference type="InParanoid" id="A0A1B0GTW7"/>
<dbReference type="OMA" id="CTERGAY"/>
<dbReference type="OrthoDB" id="527990at2759"/>
<dbReference type="PAN-GO" id="A0A1B0GTW7">
    <property type="GO annotations" value="2 GO annotations based on evolutionary models"/>
</dbReference>
<dbReference type="Pharos" id="A0A1B0GTW7">
    <property type="development level" value="Tdark"/>
</dbReference>
<dbReference type="PRO" id="PR:A0A1B0GTW7"/>
<dbReference type="Proteomes" id="UP000005640">
    <property type="component" value="Chromosome 14"/>
</dbReference>
<dbReference type="RNAct" id="A0A1B0GTW7">
    <property type="molecule type" value="protein"/>
</dbReference>
<dbReference type="Bgee" id="ENSG00000283654">
    <property type="expression patterns" value="Expressed in mucosa of stomach and 38 other cell types or tissues"/>
</dbReference>
<dbReference type="ExpressionAtlas" id="A0A1B0GTW7">
    <property type="expression patterns" value="baseline and differential"/>
</dbReference>
<dbReference type="GO" id="GO:0005737">
    <property type="term" value="C:cytoplasm"/>
    <property type="evidence" value="ECO:0000318"/>
    <property type="project" value="GO_Central"/>
</dbReference>
<dbReference type="GO" id="GO:0016020">
    <property type="term" value="C:membrane"/>
    <property type="evidence" value="ECO:0007669"/>
    <property type="project" value="UniProtKB-SubCell"/>
</dbReference>
<dbReference type="GO" id="GO:0046872">
    <property type="term" value="F:metal ion binding"/>
    <property type="evidence" value="ECO:0007669"/>
    <property type="project" value="UniProtKB-KW"/>
</dbReference>
<dbReference type="GO" id="GO:0004222">
    <property type="term" value="F:metalloendopeptidase activity"/>
    <property type="evidence" value="ECO:0007669"/>
    <property type="project" value="InterPro"/>
</dbReference>
<dbReference type="GO" id="GO:0008233">
    <property type="term" value="F:peptidase activity"/>
    <property type="evidence" value="ECO:0000318"/>
    <property type="project" value="GO_Central"/>
</dbReference>
<dbReference type="GO" id="GO:0007155">
    <property type="term" value="P:cell adhesion"/>
    <property type="evidence" value="ECO:0007669"/>
    <property type="project" value="InterPro"/>
</dbReference>
<dbReference type="GO" id="GO:0061966">
    <property type="term" value="P:establishment of left/right asymmetry"/>
    <property type="evidence" value="ECO:0000250"/>
    <property type="project" value="UniProtKB"/>
</dbReference>
<dbReference type="GO" id="GO:0006508">
    <property type="term" value="P:proteolysis"/>
    <property type="evidence" value="ECO:0007669"/>
    <property type="project" value="UniProtKB-KW"/>
</dbReference>
<dbReference type="FunFam" id="3.10.170.20:FF:000006">
    <property type="entry name" value="Leishmanolysin like peptidase 2"/>
    <property type="match status" value="1"/>
</dbReference>
<dbReference type="FunFam" id="3.90.132.10:FF:000002">
    <property type="entry name" value="Leishmanolysin like peptidase 2"/>
    <property type="match status" value="1"/>
</dbReference>
<dbReference type="Gene3D" id="3.10.170.20">
    <property type="match status" value="1"/>
</dbReference>
<dbReference type="Gene3D" id="3.90.132.10">
    <property type="entry name" value="Leishmanolysin , domain 2"/>
    <property type="match status" value="1"/>
</dbReference>
<dbReference type="InterPro" id="IPR001577">
    <property type="entry name" value="Peptidase_M8"/>
</dbReference>
<dbReference type="PANTHER" id="PTHR10942:SF6">
    <property type="entry name" value="CILIATED LEFT-RIGHT ORGANIZER METALLOPEPTIDASE"/>
    <property type="match status" value="1"/>
</dbReference>
<dbReference type="PANTHER" id="PTHR10942">
    <property type="entry name" value="LEISHMANOLYSIN-LIKE PEPTIDASE"/>
    <property type="match status" value="1"/>
</dbReference>
<dbReference type="Pfam" id="PF01457">
    <property type="entry name" value="Peptidase_M8"/>
    <property type="match status" value="1"/>
</dbReference>
<dbReference type="SUPFAM" id="SSF55486">
    <property type="entry name" value="Metalloproteases ('zincins'), catalytic domain"/>
    <property type="match status" value="2"/>
</dbReference>
<dbReference type="PROSITE" id="PS00142">
    <property type="entry name" value="ZINC_PROTEASE"/>
    <property type="match status" value="1"/>
</dbReference>
<proteinExistence type="evidence at protein level"/>
<keyword id="KW-0025">Alternative splicing</keyword>
<keyword id="KW-0225">Disease variant</keyword>
<keyword id="KW-0325">Glycoprotein</keyword>
<keyword id="KW-1056">Heterotaxy</keyword>
<keyword id="KW-0378">Hydrolase</keyword>
<keyword id="KW-0472">Membrane</keyword>
<keyword id="KW-0479">Metal-binding</keyword>
<keyword id="KW-0482">Metalloprotease</keyword>
<keyword id="KW-0645">Protease</keyword>
<keyword id="KW-1185">Reference proteome</keyword>
<keyword id="KW-0732">Signal</keyword>
<keyword id="KW-0812">Transmembrane</keyword>
<keyword id="KW-1133">Transmembrane helix</keyword>
<keyword id="KW-0862">Zinc</keyword>
<accession>A0A1B0GTW7</accession>
<accession>A0A2R8Y3T5</accession>
<comment type="function">
    <text evidence="1">Putative metalloproteinase that plays a role in left-right patterning process.</text>
</comment>
<comment type="cofactor">
    <cofactor evidence="2">
        <name>Zn(2+)</name>
        <dbReference type="ChEBI" id="CHEBI:29105"/>
    </cofactor>
    <text evidence="2">Binds 1 zinc ion per subunit.</text>
</comment>
<comment type="subcellular location">
    <subcellularLocation>
        <location evidence="4">Membrane</location>
        <topology evidence="4">Single-pass type I membrane protein</topology>
    </subcellularLocation>
</comment>
<comment type="alternative products">
    <event type="alternative splicing"/>
    <isoform>
        <id>A0A1B0GTW7-1</id>
        <name>1</name>
        <sequence type="displayed"/>
    </isoform>
    <isoform>
        <id>A0A1B0GTW7-2</id>
        <name>2</name>
        <sequence type="described" ref="VSP_061525"/>
    </isoform>
    <isoform>
        <id>A0A1B0GTW7-3</id>
        <name>3</name>
        <sequence type="described" ref="VSP_061523 VSP_061524 VSP_061526"/>
    </isoform>
</comment>
<comment type="disease" evidence="8">
    <disease id="DI-06243">
        <name>Heterotaxy, visceral, 12, autosomal</name>
        <acronym>HTX12</acronym>
        <description>A form of visceral heterotaxy, a complex disorder due to disruption of the normal left-right asymmetry of the thoracoabdominal organs. Visceral heterotaxy or situs ambiguus results in randomization of the placement of visceral organs, including the heart, lungs, liver, spleen, and stomach. The organs are oriented randomly with respect to the left-right axis and with respect to one another. It can be associated with a variety of congenital defects including cardiac malformations. Early death may occur. HTX12 inheritance is autosomal recessive.</description>
        <dbReference type="MIM" id="619702"/>
    </disease>
    <text>The disease is caused by variants affecting the gene represented in this entry.</text>
</comment>
<comment type="similarity">
    <text evidence="10">Belongs to the peptidase M8 family.</text>
</comment>
<evidence type="ECO:0000250" key="1">
    <source>
        <dbReference type="UniProtKB" id="A0A1D5NSK0"/>
    </source>
</evidence>
<evidence type="ECO:0000250" key="2">
    <source>
        <dbReference type="UniProtKB" id="P08148"/>
    </source>
</evidence>
<evidence type="ECO:0000250" key="3">
    <source>
        <dbReference type="UniProtKB" id="Q9VH19"/>
    </source>
</evidence>
<evidence type="ECO:0000255" key="4"/>
<evidence type="ECO:0000255" key="5">
    <source>
        <dbReference type="PROSITE-ProRule" id="PRU00498"/>
    </source>
</evidence>
<evidence type="ECO:0000255" key="6">
    <source>
        <dbReference type="PROSITE-ProRule" id="PRU10095"/>
    </source>
</evidence>
<evidence type="ECO:0000256" key="7">
    <source>
        <dbReference type="SAM" id="MobiDB-lite"/>
    </source>
</evidence>
<evidence type="ECO:0000269" key="8">
    <source>
    </source>
</evidence>
<evidence type="ECO:0000303" key="9">
    <source>
    </source>
</evidence>
<evidence type="ECO:0000305" key="10"/>
<evidence type="ECO:0000312" key="11">
    <source>
        <dbReference type="HGNC" id="HGNC:53647"/>
    </source>
</evidence>
<reference key="1">
    <citation type="journal article" date="2003" name="Nature">
        <title>The DNA sequence and analysis of human chromosome 14.</title>
        <authorList>
            <person name="Heilig R."/>
            <person name="Eckenberg R."/>
            <person name="Petit J.-L."/>
            <person name="Fonknechten N."/>
            <person name="Da Silva C."/>
            <person name="Cattolico L."/>
            <person name="Levy M."/>
            <person name="Barbe V."/>
            <person name="De Berardinis V."/>
            <person name="Ureta-Vidal A."/>
            <person name="Pelletier E."/>
            <person name="Vico V."/>
            <person name="Anthouard V."/>
            <person name="Rowen L."/>
            <person name="Madan A."/>
            <person name="Qin S."/>
            <person name="Sun H."/>
            <person name="Du H."/>
            <person name="Pepin K."/>
            <person name="Artiguenave F."/>
            <person name="Robert C."/>
            <person name="Cruaud C."/>
            <person name="Bruels T."/>
            <person name="Jaillon O."/>
            <person name="Friedlander L."/>
            <person name="Samson G."/>
            <person name="Brottier P."/>
            <person name="Cure S."/>
            <person name="Segurens B."/>
            <person name="Aniere F."/>
            <person name="Samain S."/>
            <person name="Crespeau H."/>
            <person name="Abbasi N."/>
            <person name="Aiach N."/>
            <person name="Boscus D."/>
            <person name="Dickhoff R."/>
            <person name="Dors M."/>
            <person name="Dubois I."/>
            <person name="Friedman C."/>
            <person name="Gouyvenoux M."/>
            <person name="James R."/>
            <person name="Madan A."/>
            <person name="Mairey-Estrada B."/>
            <person name="Mangenot S."/>
            <person name="Martins N."/>
            <person name="Menard M."/>
            <person name="Oztas S."/>
            <person name="Ratcliffe A."/>
            <person name="Shaffer T."/>
            <person name="Trask B."/>
            <person name="Vacherie B."/>
            <person name="Bellemere C."/>
            <person name="Belser C."/>
            <person name="Besnard-Gonnet M."/>
            <person name="Bartol-Mavel D."/>
            <person name="Boutard M."/>
            <person name="Briez-Silla S."/>
            <person name="Combette S."/>
            <person name="Dufosse-Laurent V."/>
            <person name="Ferron C."/>
            <person name="Lechaplais C."/>
            <person name="Louesse C."/>
            <person name="Muselet D."/>
            <person name="Magdelenat G."/>
            <person name="Pateau E."/>
            <person name="Petit E."/>
            <person name="Sirvain-Trukniewicz P."/>
            <person name="Trybou A."/>
            <person name="Vega-Czarny N."/>
            <person name="Bataille E."/>
            <person name="Bluet E."/>
            <person name="Bordelais I."/>
            <person name="Dubois M."/>
            <person name="Dumont C."/>
            <person name="Guerin T."/>
            <person name="Haffray S."/>
            <person name="Hammadi R."/>
            <person name="Muanga J."/>
            <person name="Pellouin V."/>
            <person name="Robert D."/>
            <person name="Wunderle E."/>
            <person name="Gauguet G."/>
            <person name="Roy A."/>
            <person name="Sainte-Marthe L."/>
            <person name="Verdier J."/>
            <person name="Verdier-Discala C."/>
            <person name="Hillier L.W."/>
            <person name="Fulton L."/>
            <person name="McPherson J."/>
            <person name="Matsuda F."/>
            <person name="Wilson R."/>
            <person name="Scarpelli C."/>
            <person name="Gyapay G."/>
            <person name="Wincker P."/>
            <person name="Saurin W."/>
            <person name="Quetier F."/>
            <person name="Waterston R."/>
            <person name="Hood L."/>
            <person name="Weissenbach J."/>
        </authorList>
    </citation>
    <scope>NUCLEOTIDE SEQUENCE [LARGE SCALE GENOMIC DNA]</scope>
</reference>
<reference key="2">
    <citation type="journal article" date="2004" name="Genome Res.">
        <title>The status, quality, and expansion of the NIH full-length cDNA project: the Mammalian Gene Collection (MGC).</title>
        <authorList>
            <consortium name="The MGC Project Team"/>
        </authorList>
    </citation>
    <scope>NUCLEOTIDE SEQUENCE [LARGE SCALE MRNA] (ISOFORM 3)</scope>
</reference>
<reference key="3">
    <citation type="journal article" date="2022" name="Nat. Genet.">
        <title>Discovery of a genetic module essential for assigning left-right asymmetry in humans and ancestral vertebrates.</title>
        <authorList>
            <person name="Szenker-Ravi E."/>
            <person name="Ott T."/>
            <person name="Khatoo M."/>
            <person name="de Bellaing A.M."/>
            <person name="Goh W.X."/>
            <person name="Chong Y.L."/>
            <person name="Beckers A."/>
            <person name="Kannesan D."/>
            <person name="Louvel G."/>
            <person name="Anujan P."/>
            <person name="Ravi V."/>
            <person name="Bonnard C."/>
            <person name="Moutton S."/>
            <person name="Schoen P."/>
            <person name="Fradin M."/>
            <person name="Colin E."/>
            <person name="Megarbane A."/>
            <person name="Daou L."/>
            <person name="Chehab G."/>
            <person name="Di Filippo S."/>
            <person name="Rooryck C."/>
            <person name="Deleuze J.F."/>
            <person name="Boland A."/>
            <person name="Arribard N."/>
            <person name="Eker R."/>
            <person name="Tohari S."/>
            <person name="Ng A.Y."/>
            <person name="Rio M."/>
            <person name="Lim C.T."/>
            <person name="Eisenhaber B."/>
            <person name="Eisenhaber F."/>
            <person name="Venkatesh B."/>
            <person name="Amiel J."/>
            <person name="Crollius H.R."/>
            <person name="Gordon C.T."/>
            <person name="Gossler A."/>
            <person name="Roy S."/>
            <person name="Attie-Bitach T."/>
            <person name="Blum M."/>
            <person name="Bouvagnet P."/>
            <person name="Reversade B."/>
        </authorList>
    </citation>
    <scope>INVOLVEMENT IN HTX12</scope>
    <scope>VARIANTS HTX12 PHE-31; 191-ARG--VAL-788 DEL; SER-324; 346-TRP--VAL-788 DEL; LEU-384; ILE-389; PHE-456 DEL AND PRO-469</scope>
</reference>
<protein>
    <recommendedName>
        <fullName evidence="9">Ciliated left-right organizer metallopeptidase</fullName>
        <ecNumber evidence="3">3.4.24.-</ecNumber>
    </recommendedName>
    <alternativeName>
        <fullName evidence="10">Leishmanolysin-like peptidase 2</fullName>
    </alternativeName>
</protein>
<gene>
    <name evidence="11" type="primary">CIROP</name>
    <name evidence="11" type="synonym">LMLN2</name>
</gene>
<feature type="signal peptide" evidence="4">
    <location>
        <begin position="1"/>
        <end position="20"/>
    </location>
</feature>
<feature type="chain" id="PRO_5008408627" description="Ciliated left-right organizer metallopeptidase" evidence="4">
    <location>
        <begin position="21"/>
        <end position="788"/>
    </location>
</feature>
<feature type="topological domain" description="Extracellular" evidence="10">
    <location>
        <begin position="21"/>
        <end position="735"/>
    </location>
</feature>
<feature type="transmembrane region" description="Helical" evidence="4">
    <location>
        <begin position="736"/>
        <end position="756"/>
    </location>
</feature>
<feature type="topological domain" description="Cytoplasmic" evidence="10">
    <location>
        <begin position="757"/>
        <end position="788"/>
    </location>
</feature>
<feature type="region of interest" description="Disordered" evidence="7">
    <location>
        <begin position="40"/>
        <end position="59"/>
    </location>
</feature>
<feature type="region of interest" description="Disordered" evidence="7">
    <location>
        <begin position="767"/>
        <end position="788"/>
    </location>
</feature>
<feature type="compositionally biased region" description="Low complexity" evidence="7">
    <location>
        <begin position="40"/>
        <end position="56"/>
    </location>
</feature>
<feature type="active site" evidence="6">
    <location>
        <position position="306"/>
    </location>
</feature>
<feature type="binding site" evidence="6">
    <location>
        <position position="305"/>
    </location>
    <ligand>
        <name>Zn(2+)</name>
        <dbReference type="ChEBI" id="CHEBI:29105"/>
        <note>catalytic</note>
    </ligand>
</feature>
<feature type="binding site" evidence="6">
    <location>
        <position position="309"/>
    </location>
    <ligand>
        <name>Zn(2+)</name>
        <dbReference type="ChEBI" id="CHEBI:29105"/>
        <note>catalytic</note>
    </ligand>
</feature>
<feature type="binding site" evidence="6">
    <location>
        <position position="385"/>
    </location>
    <ligand>
        <name>Zn(2+)</name>
        <dbReference type="ChEBI" id="CHEBI:29105"/>
        <note>catalytic</note>
    </ligand>
</feature>
<feature type="glycosylation site" description="N-linked (GlcNAc...) asparagine" evidence="5">
    <location>
        <position position="333"/>
    </location>
</feature>
<feature type="glycosylation site" description="N-linked (GlcNAc...) asparagine" evidence="5">
    <location>
        <position position="425"/>
    </location>
</feature>
<feature type="glycosylation site" description="N-linked (GlcNAc...) asparagine" evidence="5">
    <location>
        <position position="491"/>
    </location>
</feature>
<feature type="glycosylation site" description="N-linked (GlcNAc...) asparagine" evidence="5">
    <location>
        <position position="524"/>
    </location>
</feature>
<feature type="glycosylation site" description="N-linked (GlcNAc...) asparagine" evidence="5">
    <location>
        <position position="713"/>
    </location>
</feature>
<feature type="splice variant" id="VSP_061523" description="In isoform 3.">
    <original>V</original>
    <variation>VPPV</variation>
    <location>
        <position position="108"/>
    </location>
</feature>
<feature type="splice variant" id="VSP_061524" description="In isoform 3.">
    <location>
        <begin position="202"/>
        <end position="301"/>
    </location>
</feature>
<feature type="splice variant" id="VSP_061525" description="In isoform 2.">
    <location>
        <begin position="202"/>
        <end position="259"/>
    </location>
</feature>
<feature type="splice variant" id="VSP_061526" description="In isoform 3.">
    <original>SEC</original>
    <variation>VSR</variation>
    <location>
        <begin position="493"/>
        <end position="495"/>
    </location>
</feature>
<feature type="sequence variant" id="VAR_086199" description="In HTX12; uncertain significance; dbSNP:rs553352307." evidence="8">
    <original>S</original>
    <variation>F</variation>
    <location>
        <position position="31"/>
    </location>
</feature>
<feature type="sequence variant" id="VAR_086200" description="In HTX12." evidence="8">
    <location>
        <begin position="191"/>
        <end position="788"/>
    </location>
</feature>
<feature type="sequence variant" id="VAR_086201" description="In HTX12; uncertain significance." evidence="8">
    <original>C</original>
    <variation>S</variation>
    <location>
        <position position="324"/>
    </location>
</feature>
<feature type="sequence variant" id="VAR_086202" description="In HTX12." evidence="8">
    <location>
        <begin position="346"/>
        <end position="788"/>
    </location>
</feature>
<feature type="sequence variant" id="VAR_086203" description="In HTX12; uncertain significance; dbSNP:rs183023758." evidence="8">
    <original>S</original>
    <variation>L</variation>
    <location>
        <position position="384"/>
    </location>
</feature>
<feature type="sequence variant" id="VAR_086204" description="In HTX12; uncertain significance; dbSNP:rs2140282332." evidence="8">
    <original>R</original>
    <variation>I</variation>
    <location>
        <position position="389"/>
    </location>
</feature>
<feature type="sequence variant" id="VAR_086205" description="In HTX12; uncertain significance." evidence="8">
    <location>
        <position position="456"/>
    </location>
</feature>
<feature type="sequence variant" id="VAR_086206" description="In HTX12; uncertain significance." evidence="8">
    <original>L</original>
    <variation>P</variation>
    <location>
        <position position="469"/>
    </location>
</feature>
<feature type="sequence conflict" description="In Ref. 2." evidence="10" ref="2">
    <original>MLLLLL</original>
    <variation>MLLLP</variation>
    <location>
        <begin position="1"/>
        <end position="6"/>
    </location>
</feature>
<feature type="sequence conflict" description="In Ref. 2." evidence="10" ref="2">
    <original>L</original>
    <variation>Q</variation>
    <location>
        <position position="339"/>
    </location>
</feature>